<name>PSBN_GUIAB</name>
<proteinExistence type="inferred from homology"/>
<evidence type="ECO:0000255" key="1">
    <source>
        <dbReference type="HAMAP-Rule" id="MF_00293"/>
    </source>
</evidence>
<gene>
    <name evidence="1" type="primary">psbN</name>
    <name type="ordered locus">GuabCp050</name>
</gene>
<feature type="chain" id="PRO_0000362194" description="Protein PsbN">
    <location>
        <begin position="1"/>
        <end position="43"/>
    </location>
</feature>
<feature type="transmembrane region" description="Helical" evidence="1">
    <location>
        <begin position="7"/>
        <end position="27"/>
    </location>
</feature>
<organism>
    <name type="scientific">Guizotia abyssinica</name>
    <name type="common">Niger</name>
    <name type="synonym">Ramtilla</name>
    <dbReference type="NCBI Taxonomy" id="4230"/>
    <lineage>
        <taxon>Eukaryota</taxon>
        <taxon>Viridiplantae</taxon>
        <taxon>Streptophyta</taxon>
        <taxon>Embryophyta</taxon>
        <taxon>Tracheophyta</taxon>
        <taxon>Spermatophyta</taxon>
        <taxon>Magnoliopsida</taxon>
        <taxon>eudicotyledons</taxon>
        <taxon>Gunneridae</taxon>
        <taxon>Pentapetalae</taxon>
        <taxon>asterids</taxon>
        <taxon>campanulids</taxon>
        <taxon>Asterales</taxon>
        <taxon>Asteraceae</taxon>
        <taxon>Asteroideae</taxon>
        <taxon>Heliantheae alliance</taxon>
        <taxon>Millerieae</taxon>
        <taxon>Guizotia</taxon>
    </lineage>
</organism>
<reference key="1">
    <citation type="submission" date="2008-03" db="EMBL/GenBank/DDBJ databases">
        <title>Guizotia abyssinica chloroplast sequenced using Solexa.</title>
        <authorList>
            <person name="Kane N.C."/>
            <person name="Dempewolf H."/>
            <person name="Stewart M.L."/>
            <person name="Cronk Q."/>
            <person name="Rieseberrg L.H."/>
        </authorList>
    </citation>
    <scope>NUCLEOTIDE SEQUENCE [LARGE SCALE GENOMIC DNA]</scope>
    <source>
        <strain>cv. PI 508077</strain>
    </source>
</reference>
<geneLocation type="chloroplast"/>
<sequence>METATLVAIFISGLLVSFTGYALYTAFGQPSQQLRDPFEEHGD</sequence>
<dbReference type="EMBL" id="EU549769">
    <property type="protein sequence ID" value="ACB86554.1"/>
    <property type="molecule type" value="Genomic_DNA"/>
</dbReference>
<dbReference type="RefSeq" id="YP_001837388.1">
    <property type="nucleotide sequence ID" value="NC_010601.1"/>
</dbReference>
<dbReference type="SMR" id="B2LMM1"/>
<dbReference type="GeneID" id="6219117"/>
<dbReference type="GO" id="GO:0009535">
    <property type="term" value="C:chloroplast thylakoid membrane"/>
    <property type="evidence" value="ECO:0007669"/>
    <property type="project" value="UniProtKB-SubCell"/>
</dbReference>
<dbReference type="GO" id="GO:0015979">
    <property type="term" value="P:photosynthesis"/>
    <property type="evidence" value="ECO:0007669"/>
    <property type="project" value="InterPro"/>
</dbReference>
<dbReference type="HAMAP" id="MF_00293">
    <property type="entry name" value="PSII_PsbN"/>
    <property type="match status" value="1"/>
</dbReference>
<dbReference type="InterPro" id="IPR003398">
    <property type="entry name" value="PSII_PsbN"/>
</dbReference>
<dbReference type="PANTHER" id="PTHR35326">
    <property type="entry name" value="PROTEIN PSBN"/>
    <property type="match status" value="1"/>
</dbReference>
<dbReference type="PANTHER" id="PTHR35326:SF3">
    <property type="entry name" value="PROTEIN PSBN"/>
    <property type="match status" value="1"/>
</dbReference>
<dbReference type="Pfam" id="PF02468">
    <property type="entry name" value="PsbN"/>
    <property type="match status" value="1"/>
</dbReference>
<keyword id="KW-0150">Chloroplast</keyword>
<keyword id="KW-0472">Membrane</keyword>
<keyword id="KW-0934">Plastid</keyword>
<keyword id="KW-0793">Thylakoid</keyword>
<keyword id="KW-0812">Transmembrane</keyword>
<keyword id="KW-1133">Transmembrane helix</keyword>
<comment type="function">
    <text evidence="1">May play a role in photosystem I and II biogenesis.</text>
</comment>
<comment type="subcellular location">
    <subcellularLocation>
        <location evidence="1">Plastid</location>
        <location evidence="1">Chloroplast thylakoid membrane</location>
        <topology evidence="1">Single-pass membrane protein</topology>
    </subcellularLocation>
</comment>
<comment type="similarity">
    <text evidence="1">Belongs to the PsbN family.</text>
</comment>
<comment type="caution">
    <text evidence="1">Originally thought to be a component of PSII; based on experiments in Synechocystis, N.tabacum and barley, and its absence from PSII in T.elongatus and T.vulcanus, this is probably not true.</text>
</comment>
<accession>B2LMM1</accession>
<protein>
    <recommendedName>
        <fullName evidence="1">Protein PsbN</fullName>
    </recommendedName>
</protein>